<accession>B3PS18</accession>
<feature type="chain" id="PRO_1000135827" description="3-isopropylmalate dehydratase small subunit">
    <location>
        <begin position="1"/>
        <end position="202"/>
    </location>
</feature>
<keyword id="KW-0028">Amino-acid biosynthesis</keyword>
<keyword id="KW-0100">Branched-chain amino acid biosynthesis</keyword>
<keyword id="KW-0432">Leucine biosynthesis</keyword>
<keyword id="KW-0456">Lyase</keyword>
<dbReference type="EC" id="4.2.1.33" evidence="1"/>
<dbReference type="EMBL" id="CP001074">
    <property type="protein sequence ID" value="ACE93308.1"/>
    <property type="molecule type" value="Genomic_DNA"/>
</dbReference>
<dbReference type="SMR" id="B3PS18"/>
<dbReference type="KEGG" id="rec:RHECIAT_CH0004381"/>
<dbReference type="eggNOG" id="COG0066">
    <property type="taxonomic scope" value="Bacteria"/>
</dbReference>
<dbReference type="HOGENOM" id="CLU_081378_0_3_5"/>
<dbReference type="UniPathway" id="UPA00048">
    <property type="reaction ID" value="UER00071"/>
</dbReference>
<dbReference type="Proteomes" id="UP000008817">
    <property type="component" value="Chromosome"/>
</dbReference>
<dbReference type="GO" id="GO:0009316">
    <property type="term" value="C:3-isopropylmalate dehydratase complex"/>
    <property type="evidence" value="ECO:0007669"/>
    <property type="project" value="InterPro"/>
</dbReference>
<dbReference type="GO" id="GO:0003861">
    <property type="term" value="F:3-isopropylmalate dehydratase activity"/>
    <property type="evidence" value="ECO:0007669"/>
    <property type="project" value="UniProtKB-UniRule"/>
</dbReference>
<dbReference type="GO" id="GO:0009098">
    <property type="term" value="P:L-leucine biosynthetic process"/>
    <property type="evidence" value="ECO:0007669"/>
    <property type="project" value="UniProtKB-UniRule"/>
</dbReference>
<dbReference type="CDD" id="cd01577">
    <property type="entry name" value="IPMI_Swivel"/>
    <property type="match status" value="1"/>
</dbReference>
<dbReference type="FunFam" id="3.20.19.10:FF:000003">
    <property type="entry name" value="3-isopropylmalate dehydratase small subunit"/>
    <property type="match status" value="1"/>
</dbReference>
<dbReference type="Gene3D" id="3.20.19.10">
    <property type="entry name" value="Aconitase, domain 4"/>
    <property type="match status" value="1"/>
</dbReference>
<dbReference type="HAMAP" id="MF_01031">
    <property type="entry name" value="LeuD_type1"/>
    <property type="match status" value="1"/>
</dbReference>
<dbReference type="InterPro" id="IPR004431">
    <property type="entry name" value="3-IsopropMal_deHydase_ssu"/>
</dbReference>
<dbReference type="InterPro" id="IPR015928">
    <property type="entry name" value="Aconitase/3IPM_dehydase_swvl"/>
</dbReference>
<dbReference type="InterPro" id="IPR000573">
    <property type="entry name" value="AconitaseA/IPMdHydase_ssu_swvl"/>
</dbReference>
<dbReference type="InterPro" id="IPR033940">
    <property type="entry name" value="IPMI_Swivel"/>
</dbReference>
<dbReference type="InterPro" id="IPR050075">
    <property type="entry name" value="LeuD"/>
</dbReference>
<dbReference type="NCBIfam" id="TIGR00171">
    <property type="entry name" value="leuD"/>
    <property type="match status" value="1"/>
</dbReference>
<dbReference type="NCBIfam" id="NF002458">
    <property type="entry name" value="PRK01641.1"/>
    <property type="match status" value="1"/>
</dbReference>
<dbReference type="PANTHER" id="PTHR43345:SF5">
    <property type="entry name" value="3-ISOPROPYLMALATE DEHYDRATASE SMALL SUBUNIT"/>
    <property type="match status" value="1"/>
</dbReference>
<dbReference type="PANTHER" id="PTHR43345">
    <property type="entry name" value="3-ISOPROPYLMALATE DEHYDRATASE SMALL SUBUNIT 2-RELATED-RELATED"/>
    <property type="match status" value="1"/>
</dbReference>
<dbReference type="Pfam" id="PF00694">
    <property type="entry name" value="Aconitase_C"/>
    <property type="match status" value="1"/>
</dbReference>
<dbReference type="SUPFAM" id="SSF52016">
    <property type="entry name" value="LeuD/IlvD-like"/>
    <property type="match status" value="1"/>
</dbReference>
<gene>
    <name evidence="1" type="primary">leuD</name>
    <name type="ordered locus">RHECIAT_CH0004381</name>
</gene>
<proteinExistence type="inferred from homology"/>
<name>LEUD_RHIE6</name>
<protein>
    <recommendedName>
        <fullName evidence="1">3-isopropylmalate dehydratase small subunit</fullName>
        <ecNumber evidence="1">4.2.1.33</ecNumber>
    </recommendedName>
    <alternativeName>
        <fullName evidence="1">Alpha-IPM isomerase</fullName>
        <shortName evidence="1">IPMI</shortName>
    </alternativeName>
    <alternativeName>
        <fullName evidence="1">Isopropylmalate isomerase</fullName>
    </alternativeName>
</protein>
<sequence>MDKFVKLTGVAAPLPVVNIDTDMIIPKDYLKTIKRTGLGKGLFAEARYNEDGSENPDFVLNKPAYRDAKILVAGDNFGCGSSREHAPWALLDFGIRCVISTSFADIFYNNCFKNGILPIKVSQEDLDKLMDDASRGSNAILTVDLENLEITGPDGGSIKFDLDAFKRHCLLNGLDDIGLTMEKGKAIDEFEKKNAASHPWAA</sequence>
<reference key="1">
    <citation type="journal article" date="2010" name="Appl. Environ. Microbiol.">
        <title>Conserved symbiotic plasmid DNA sequences in the multireplicon pangenomic structure of Rhizobium etli.</title>
        <authorList>
            <person name="Gonzalez V."/>
            <person name="Acosta J.L."/>
            <person name="Santamaria R.I."/>
            <person name="Bustos P."/>
            <person name="Fernandez J.L."/>
            <person name="Hernandez Gonzalez I.L."/>
            <person name="Diaz R."/>
            <person name="Flores M."/>
            <person name="Palacios R."/>
            <person name="Mora J."/>
            <person name="Davila G."/>
        </authorList>
    </citation>
    <scope>NUCLEOTIDE SEQUENCE [LARGE SCALE GENOMIC DNA]</scope>
    <source>
        <strain>CIAT 652</strain>
    </source>
</reference>
<evidence type="ECO:0000255" key="1">
    <source>
        <dbReference type="HAMAP-Rule" id="MF_01031"/>
    </source>
</evidence>
<organism>
    <name type="scientific">Rhizobium etli (strain CIAT 652)</name>
    <dbReference type="NCBI Taxonomy" id="491916"/>
    <lineage>
        <taxon>Bacteria</taxon>
        <taxon>Pseudomonadati</taxon>
        <taxon>Pseudomonadota</taxon>
        <taxon>Alphaproteobacteria</taxon>
        <taxon>Hyphomicrobiales</taxon>
        <taxon>Rhizobiaceae</taxon>
        <taxon>Rhizobium/Agrobacterium group</taxon>
        <taxon>Rhizobium</taxon>
    </lineage>
</organism>
<comment type="function">
    <text evidence="1">Catalyzes the isomerization between 2-isopropylmalate and 3-isopropylmalate, via the formation of 2-isopropylmaleate.</text>
</comment>
<comment type="catalytic activity">
    <reaction evidence="1">
        <text>(2R,3S)-3-isopropylmalate = (2S)-2-isopropylmalate</text>
        <dbReference type="Rhea" id="RHEA:32287"/>
        <dbReference type="ChEBI" id="CHEBI:1178"/>
        <dbReference type="ChEBI" id="CHEBI:35121"/>
        <dbReference type="EC" id="4.2.1.33"/>
    </reaction>
</comment>
<comment type="pathway">
    <text evidence="1">Amino-acid biosynthesis; L-leucine biosynthesis; L-leucine from 3-methyl-2-oxobutanoate: step 2/4.</text>
</comment>
<comment type="subunit">
    <text evidence="1">Heterodimer of LeuC and LeuD.</text>
</comment>
<comment type="similarity">
    <text evidence="1">Belongs to the LeuD family. LeuD type 1 subfamily.</text>
</comment>